<dbReference type="EC" id="6.1.1.15" evidence="1"/>
<dbReference type="EMBL" id="CP000388">
    <property type="protein sequence ID" value="ABG39802.1"/>
    <property type="molecule type" value="Genomic_DNA"/>
</dbReference>
<dbReference type="RefSeq" id="WP_011574126.1">
    <property type="nucleotide sequence ID" value="NC_008228.1"/>
</dbReference>
<dbReference type="SMR" id="Q15WD6"/>
<dbReference type="STRING" id="342610.Patl_1276"/>
<dbReference type="KEGG" id="pat:Patl_1276"/>
<dbReference type="eggNOG" id="COG0442">
    <property type="taxonomic scope" value="Bacteria"/>
</dbReference>
<dbReference type="HOGENOM" id="CLU_016739_0_0_6"/>
<dbReference type="OrthoDB" id="9809052at2"/>
<dbReference type="Proteomes" id="UP000001981">
    <property type="component" value="Chromosome"/>
</dbReference>
<dbReference type="GO" id="GO:0005829">
    <property type="term" value="C:cytosol"/>
    <property type="evidence" value="ECO:0007669"/>
    <property type="project" value="TreeGrafter"/>
</dbReference>
<dbReference type="GO" id="GO:0002161">
    <property type="term" value="F:aminoacyl-tRNA deacylase activity"/>
    <property type="evidence" value="ECO:0007669"/>
    <property type="project" value="InterPro"/>
</dbReference>
<dbReference type="GO" id="GO:0005524">
    <property type="term" value="F:ATP binding"/>
    <property type="evidence" value="ECO:0007669"/>
    <property type="project" value="UniProtKB-UniRule"/>
</dbReference>
<dbReference type="GO" id="GO:0004827">
    <property type="term" value="F:proline-tRNA ligase activity"/>
    <property type="evidence" value="ECO:0007669"/>
    <property type="project" value="UniProtKB-UniRule"/>
</dbReference>
<dbReference type="GO" id="GO:0006433">
    <property type="term" value="P:prolyl-tRNA aminoacylation"/>
    <property type="evidence" value="ECO:0007669"/>
    <property type="project" value="UniProtKB-UniRule"/>
</dbReference>
<dbReference type="CDD" id="cd04334">
    <property type="entry name" value="ProRS-INS"/>
    <property type="match status" value="1"/>
</dbReference>
<dbReference type="CDD" id="cd00861">
    <property type="entry name" value="ProRS_anticodon_short"/>
    <property type="match status" value="1"/>
</dbReference>
<dbReference type="CDD" id="cd00779">
    <property type="entry name" value="ProRS_core_prok"/>
    <property type="match status" value="1"/>
</dbReference>
<dbReference type="FunFam" id="3.30.930.10:FF:000043">
    <property type="entry name" value="Proline--tRNA ligase"/>
    <property type="match status" value="1"/>
</dbReference>
<dbReference type="FunFam" id="3.30.930.10:FF:000097">
    <property type="entry name" value="Proline--tRNA ligase"/>
    <property type="match status" value="1"/>
</dbReference>
<dbReference type="FunFam" id="3.40.50.800:FF:000006">
    <property type="entry name" value="Proline--tRNA ligase"/>
    <property type="match status" value="1"/>
</dbReference>
<dbReference type="Gene3D" id="3.40.50.800">
    <property type="entry name" value="Anticodon-binding domain"/>
    <property type="match status" value="1"/>
</dbReference>
<dbReference type="Gene3D" id="3.30.930.10">
    <property type="entry name" value="Bira Bifunctional Protein, Domain 2"/>
    <property type="match status" value="2"/>
</dbReference>
<dbReference type="Gene3D" id="3.90.960.10">
    <property type="entry name" value="YbaK/aminoacyl-tRNA synthetase-associated domain"/>
    <property type="match status" value="1"/>
</dbReference>
<dbReference type="HAMAP" id="MF_01569">
    <property type="entry name" value="Pro_tRNA_synth_type1"/>
    <property type="match status" value="1"/>
</dbReference>
<dbReference type="InterPro" id="IPR002314">
    <property type="entry name" value="aa-tRNA-synt_IIb"/>
</dbReference>
<dbReference type="InterPro" id="IPR006195">
    <property type="entry name" value="aa-tRNA-synth_II"/>
</dbReference>
<dbReference type="InterPro" id="IPR045864">
    <property type="entry name" value="aa-tRNA-synth_II/BPL/LPL"/>
</dbReference>
<dbReference type="InterPro" id="IPR004154">
    <property type="entry name" value="Anticodon-bd"/>
</dbReference>
<dbReference type="InterPro" id="IPR036621">
    <property type="entry name" value="Anticodon-bd_dom_sf"/>
</dbReference>
<dbReference type="InterPro" id="IPR002316">
    <property type="entry name" value="Pro-tRNA-ligase_IIa"/>
</dbReference>
<dbReference type="InterPro" id="IPR004500">
    <property type="entry name" value="Pro-tRNA-synth_IIa_bac-type"/>
</dbReference>
<dbReference type="InterPro" id="IPR023717">
    <property type="entry name" value="Pro-tRNA-Synthase_IIa_type1"/>
</dbReference>
<dbReference type="InterPro" id="IPR050062">
    <property type="entry name" value="Pro-tRNA_synthetase"/>
</dbReference>
<dbReference type="InterPro" id="IPR044140">
    <property type="entry name" value="ProRS_anticodon_short"/>
</dbReference>
<dbReference type="InterPro" id="IPR033730">
    <property type="entry name" value="ProRS_core_prok"/>
</dbReference>
<dbReference type="InterPro" id="IPR036754">
    <property type="entry name" value="YbaK/aa-tRNA-synt-asso_dom_sf"/>
</dbReference>
<dbReference type="InterPro" id="IPR007214">
    <property type="entry name" value="YbaK/aa-tRNA-synth-assoc-dom"/>
</dbReference>
<dbReference type="NCBIfam" id="NF006625">
    <property type="entry name" value="PRK09194.1"/>
    <property type="match status" value="1"/>
</dbReference>
<dbReference type="NCBIfam" id="TIGR00409">
    <property type="entry name" value="proS_fam_II"/>
    <property type="match status" value="1"/>
</dbReference>
<dbReference type="PANTHER" id="PTHR42753">
    <property type="entry name" value="MITOCHONDRIAL RIBOSOME PROTEIN L39/PROLYL-TRNA LIGASE FAMILY MEMBER"/>
    <property type="match status" value="1"/>
</dbReference>
<dbReference type="PANTHER" id="PTHR42753:SF2">
    <property type="entry name" value="PROLINE--TRNA LIGASE"/>
    <property type="match status" value="1"/>
</dbReference>
<dbReference type="Pfam" id="PF03129">
    <property type="entry name" value="HGTP_anticodon"/>
    <property type="match status" value="1"/>
</dbReference>
<dbReference type="Pfam" id="PF00587">
    <property type="entry name" value="tRNA-synt_2b"/>
    <property type="match status" value="1"/>
</dbReference>
<dbReference type="Pfam" id="PF04073">
    <property type="entry name" value="tRNA_edit"/>
    <property type="match status" value="1"/>
</dbReference>
<dbReference type="PIRSF" id="PIRSF001535">
    <property type="entry name" value="ProRS_1"/>
    <property type="match status" value="1"/>
</dbReference>
<dbReference type="PRINTS" id="PR01046">
    <property type="entry name" value="TRNASYNTHPRO"/>
</dbReference>
<dbReference type="SUPFAM" id="SSF52954">
    <property type="entry name" value="Class II aaRS ABD-related"/>
    <property type="match status" value="1"/>
</dbReference>
<dbReference type="SUPFAM" id="SSF55681">
    <property type="entry name" value="Class II aaRS and biotin synthetases"/>
    <property type="match status" value="1"/>
</dbReference>
<dbReference type="SUPFAM" id="SSF55826">
    <property type="entry name" value="YbaK/ProRS associated domain"/>
    <property type="match status" value="1"/>
</dbReference>
<dbReference type="PROSITE" id="PS50862">
    <property type="entry name" value="AA_TRNA_LIGASE_II"/>
    <property type="match status" value="1"/>
</dbReference>
<evidence type="ECO:0000255" key="1">
    <source>
        <dbReference type="HAMAP-Rule" id="MF_01569"/>
    </source>
</evidence>
<sequence>MRTSQYLLSTQKETPADAEVISHQLMLRAGLVRKLASGLYTWLPTGLRVLNKVAQIVREEMDRAGSLEILMPVVQPADLWQESGRWDEYGPELLRIKDRHYRDFVLGPTHEEVVTALVKNEVSSYKQLPLNVYQVQTKFRDEVRPRFGVMRGREFTMKDAYSFHLSDECLNKTYDDMFAAYCRVFERINLEFRPVIADNGSIGGNASHEFHVLADSGEDDIAFSNASDYAANIEKAEALAPQFSRPAPSAELTKVATPNAKTIEQVSALLNIPAEQSVKTLIVLGEADNKGQQGLIALVLRGDHQLNELKAEKIDGVYAPLTMASEAQIEDTIGCSIGSIGPVGLNIPVIADRSAAVLADFVCGANENDVHYTGANWERDAKEFQEADIRNVQAGDPSPDGQGTLEIKRGIEVGHIFQLGSKYSEALNCGVLDENGKHQVLNMGCYGIGVSRIVAAAIEQNHDKYGIIWPDAIAPFKVAIVPMNMHKSHRIQQVAEDLYAQLKAAGVEVLFDDRKERPGVMFNDMELVGVPHTIVIGERNLDEQKVEYKNRRSGEKQLIDIPQLAEFVSTL</sequence>
<organism>
    <name type="scientific">Pseudoalteromonas atlantica (strain T6c / ATCC BAA-1087)</name>
    <dbReference type="NCBI Taxonomy" id="3042615"/>
    <lineage>
        <taxon>Bacteria</taxon>
        <taxon>Pseudomonadati</taxon>
        <taxon>Pseudomonadota</taxon>
        <taxon>Gammaproteobacteria</taxon>
        <taxon>Alteromonadales</taxon>
        <taxon>Alteromonadaceae</taxon>
        <taxon>Paraglaciecola</taxon>
    </lineage>
</organism>
<gene>
    <name evidence="1" type="primary">proS</name>
    <name type="ordered locus">Patl_1276</name>
</gene>
<comment type="function">
    <text evidence="1">Catalyzes the attachment of proline to tRNA(Pro) in a two-step reaction: proline is first activated by ATP to form Pro-AMP and then transferred to the acceptor end of tRNA(Pro). As ProRS can inadvertently accommodate and process non-cognate amino acids such as alanine and cysteine, to avoid such errors it has two additional distinct editing activities against alanine. One activity is designated as 'pretransfer' editing and involves the tRNA(Pro)-independent hydrolysis of activated Ala-AMP. The other activity is designated 'posttransfer' editing and involves deacylation of mischarged Ala-tRNA(Pro). The misacylated Cys-tRNA(Pro) is not edited by ProRS.</text>
</comment>
<comment type="catalytic activity">
    <reaction evidence="1">
        <text>tRNA(Pro) + L-proline + ATP = L-prolyl-tRNA(Pro) + AMP + diphosphate</text>
        <dbReference type="Rhea" id="RHEA:14305"/>
        <dbReference type="Rhea" id="RHEA-COMP:9700"/>
        <dbReference type="Rhea" id="RHEA-COMP:9702"/>
        <dbReference type="ChEBI" id="CHEBI:30616"/>
        <dbReference type="ChEBI" id="CHEBI:33019"/>
        <dbReference type="ChEBI" id="CHEBI:60039"/>
        <dbReference type="ChEBI" id="CHEBI:78442"/>
        <dbReference type="ChEBI" id="CHEBI:78532"/>
        <dbReference type="ChEBI" id="CHEBI:456215"/>
        <dbReference type="EC" id="6.1.1.15"/>
    </reaction>
</comment>
<comment type="subunit">
    <text evidence="1">Homodimer.</text>
</comment>
<comment type="subcellular location">
    <subcellularLocation>
        <location evidence="1">Cytoplasm</location>
    </subcellularLocation>
</comment>
<comment type="domain">
    <text evidence="1">Consists of three domains: the N-terminal catalytic domain, the editing domain and the C-terminal anticodon-binding domain.</text>
</comment>
<comment type="similarity">
    <text evidence="1">Belongs to the class-II aminoacyl-tRNA synthetase family. ProS type 1 subfamily.</text>
</comment>
<accession>Q15WD6</accession>
<proteinExistence type="inferred from homology"/>
<protein>
    <recommendedName>
        <fullName evidence="1">Proline--tRNA ligase</fullName>
        <ecNumber evidence="1">6.1.1.15</ecNumber>
    </recommendedName>
    <alternativeName>
        <fullName evidence="1">Prolyl-tRNA synthetase</fullName>
        <shortName evidence="1">ProRS</shortName>
    </alternativeName>
</protein>
<reference key="1">
    <citation type="submission" date="2006-06" db="EMBL/GenBank/DDBJ databases">
        <title>Complete sequence of Pseudoalteromonas atlantica T6c.</title>
        <authorList>
            <consortium name="US DOE Joint Genome Institute"/>
            <person name="Copeland A."/>
            <person name="Lucas S."/>
            <person name="Lapidus A."/>
            <person name="Barry K."/>
            <person name="Detter J.C."/>
            <person name="Glavina del Rio T."/>
            <person name="Hammon N."/>
            <person name="Israni S."/>
            <person name="Dalin E."/>
            <person name="Tice H."/>
            <person name="Pitluck S."/>
            <person name="Saunders E."/>
            <person name="Brettin T."/>
            <person name="Bruce D."/>
            <person name="Han C."/>
            <person name="Tapia R."/>
            <person name="Gilna P."/>
            <person name="Schmutz J."/>
            <person name="Larimer F."/>
            <person name="Land M."/>
            <person name="Hauser L."/>
            <person name="Kyrpides N."/>
            <person name="Kim E."/>
            <person name="Karls A.C."/>
            <person name="Bartlett D."/>
            <person name="Higgins B.P."/>
            <person name="Richardson P."/>
        </authorList>
    </citation>
    <scope>NUCLEOTIDE SEQUENCE [LARGE SCALE GENOMIC DNA]</scope>
    <source>
        <strain>T6c / ATCC BAA-1087</strain>
    </source>
</reference>
<keyword id="KW-0030">Aminoacyl-tRNA synthetase</keyword>
<keyword id="KW-0067">ATP-binding</keyword>
<keyword id="KW-0963">Cytoplasm</keyword>
<keyword id="KW-0436">Ligase</keyword>
<keyword id="KW-0547">Nucleotide-binding</keyword>
<keyword id="KW-0648">Protein biosynthesis</keyword>
<feature type="chain" id="PRO_0000288366" description="Proline--tRNA ligase">
    <location>
        <begin position="1"/>
        <end position="571"/>
    </location>
</feature>
<name>SYP_PSEA6</name>